<dbReference type="EMBL" id="CP001620">
    <property type="protein sequence ID" value="ACR18530.1"/>
    <property type="molecule type" value="Genomic_DNA"/>
</dbReference>
<dbReference type="RefSeq" id="WP_012732417.1">
    <property type="nucleotide sequence ID" value="NC_012704.1"/>
</dbReference>
<dbReference type="SMR" id="C4LL25"/>
<dbReference type="STRING" id="645127.ckrop_1810"/>
<dbReference type="KEGG" id="ckp:ckrop_1810"/>
<dbReference type="eggNOG" id="COG0198">
    <property type="taxonomic scope" value="Bacteria"/>
</dbReference>
<dbReference type="HOGENOM" id="CLU_093315_2_0_11"/>
<dbReference type="OrthoDB" id="9807419at2"/>
<dbReference type="Proteomes" id="UP000001473">
    <property type="component" value="Chromosome"/>
</dbReference>
<dbReference type="GO" id="GO:1990904">
    <property type="term" value="C:ribonucleoprotein complex"/>
    <property type="evidence" value="ECO:0007669"/>
    <property type="project" value="UniProtKB-KW"/>
</dbReference>
<dbReference type="GO" id="GO:0005840">
    <property type="term" value="C:ribosome"/>
    <property type="evidence" value="ECO:0007669"/>
    <property type="project" value="UniProtKB-KW"/>
</dbReference>
<dbReference type="GO" id="GO:0019843">
    <property type="term" value="F:rRNA binding"/>
    <property type="evidence" value="ECO:0007669"/>
    <property type="project" value="UniProtKB-UniRule"/>
</dbReference>
<dbReference type="GO" id="GO:0003735">
    <property type="term" value="F:structural constituent of ribosome"/>
    <property type="evidence" value="ECO:0007669"/>
    <property type="project" value="InterPro"/>
</dbReference>
<dbReference type="GO" id="GO:0006412">
    <property type="term" value="P:translation"/>
    <property type="evidence" value="ECO:0007669"/>
    <property type="project" value="UniProtKB-UniRule"/>
</dbReference>
<dbReference type="CDD" id="cd06089">
    <property type="entry name" value="KOW_RPL26"/>
    <property type="match status" value="1"/>
</dbReference>
<dbReference type="FunFam" id="2.30.30.30:FF:000004">
    <property type="entry name" value="50S ribosomal protein L24"/>
    <property type="match status" value="1"/>
</dbReference>
<dbReference type="Gene3D" id="2.30.30.30">
    <property type="match status" value="1"/>
</dbReference>
<dbReference type="HAMAP" id="MF_01326_B">
    <property type="entry name" value="Ribosomal_uL24_B"/>
    <property type="match status" value="1"/>
</dbReference>
<dbReference type="InterPro" id="IPR005824">
    <property type="entry name" value="KOW"/>
</dbReference>
<dbReference type="InterPro" id="IPR014722">
    <property type="entry name" value="Rib_uL2_dom2"/>
</dbReference>
<dbReference type="InterPro" id="IPR003256">
    <property type="entry name" value="Ribosomal_uL24"/>
</dbReference>
<dbReference type="InterPro" id="IPR005825">
    <property type="entry name" value="Ribosomal_uL24_CS"/>
</dbReference>
<dbReference type="InterPro" id="IPR041988">
    <property type="entry name" value="Ribosomal_uL24_KOW"/>
</dbReference>
<dbReference type="InterPro" id="IPR008991">
    <property type="entry name" value="Translation_prot_SH3-like_sf"/>
</dbReference>
<dbReference type="NCBIfam" id="TIGR01079">
    <property type="entry name" value="rplX_bact"/>
    <property type="match status" value="1"/>
</dbReference>
<dbReference type="PANTHER" id="PTHR12903">
    <property type="entry name" value="MITOCHONDRIAL RIBOSOMAL PROTEIN L24"/>
    <property type="match status" value="1"/>
</dbReference>
<dbReference type="Pfam" id="PF00467">
    <property type="entry name" value="KOW"/>
    <property type="match status" value="1"/>
</dbReference>
<dbReference type="Pfam" id="PF17136">
    <property type="entry name" value="ribosomal_L24"/>
    <property type="match status" value="1"/>
</dbReference>
<dbReference type="SMART" id="SM00739">
    <property type="entry name" value="KOW"/>
    <property type="match status" value="1"/>
</dbReference>
<dbReference type="SUPFAM" id="SSF50104">
    <property type="entry name" value="Translation proteins SH3-like domain"/>
    <property type="match status" value="1"/>
</dbReference>
<dbReference type="PROSITE" id="PS01108">
    <property type="entry name" value="RIBOSOMAL_L24"/>
    <property type="match status" value="1"/>
</dbReference>
<protein>
    <recommendedName>
        <fullName evidence="1">Large ribosomal subunit protein uL24</fullName>
    </recommendedName>
    <alternativeName>
        <fullName evidence="2">50S ribosomal protein L24</fullName>
    </alternativeName>
</protein>
<reference key="1">
    <citation type="journal article" date="2008" name="J. Biotechnol.">
        <title>Ultrafast pyrosequencing of Corynebacterium kroppenstedtii DSM44385 revealed insights into the physiology of a lipophilic corynebacterium that lacks mycolic acids.</title>
        <authorList>
            <person name="Tauch A."/>
            <person name="Schneider J."/>
            <person name="Szczepanowski R."/>
            <person name="Tilker A."/>
            <person name="Viehoever P."/>
            <person name="Gartemann K.-H."/>
            <person name="Arnold W."/>
            <person name="Blom J."/>
            <person name="Brinkrolf K."/>
            <person name="Brune I."/>
            <person name="Goetker S."/>
            <person name="Weisshaar B."/>
            <person name="Goesmann A."/>
            <person name="Droege M."/>
            <person name="Puehler A."/>
        </authorList>
    </citation>
    <scope>NUCLEOTIDE SEQUENCE [LARGE SCALE GENOMIC DNA]</scope>
    <source>
        <strain>DSM 44385 / JCM 11950 / CIP 105744 / CCUG 35717</strain>
    </source>
</reference>
<keyword id="KW-1185">Reference proteome</keyword>
<keyword id="KW-0687">Ribonucleoprotein</keyword>
<keyword id="KW-0689">Ribosomal protein</keyword>
<keyword id="KW-0694">RNA-binding</keyword>
<keyword id="KW-0699">rRNA-binding</keyword>
<proteinExistence type="inferred from homology"/>
<comment type="function">
    <text evidence="1">One of two assembly initiator proteins, it binds directly to the 5'-end of the 23S rRNA, where it nucleates assembly of the 50S subunit.</text>
</comment>
<comment type="function">
    <text evidence="1">One of the proteins that surrounds the polypeptide exit tunnel on the outside of the subunit.</text>
</comment>
<comment type="subunit">
    <text evidence="1">Part of the 50S ribosomal subunit.</text>
</comment>
<comment type="similarity">
    <text evidence="1">Belongs to the universal ribosomal protein uL24 family.</text>
</comment>
<accession>C4LL25</accession>
<evidence type="ECO:0000255" key="1">
    <source>
        <dbReference type="HAMAP-Rule" id="MF_01326"/>
    </source>
</evidence>
<evidence type="ECO:0000305" key="2"/>
<organism>
    <name type="scientific">Corynebacterium kroppenstedtii (strain DSM 44385 / JCM 11950 / CIP 105744 / CCUG 35717)</name>
    <dbReference type="NCBI Taxonomy" id="645127"/>
    <lineage>
        <taxon>Bacteria</taxon>
        <taxon>Bacillati</taxon>
        <taxon>Actinomycetota</taxon>
        <taxon>Actinomycetes</taxon>
        <taxon>Mycobacteriales</taxon>
        <taxon>Corynebacteriaceae</taxon>
        <taxon>Corynebacterium</taxon>
    </lineage>
</organism>
<sequence length="104" mass="11287">MKIHKGDTVIVISGPDKGAKGKVIEAYPKRDKVLVEGVNRIKKHVANSAPERGAESGGIVTQEAPIHVSNVMIIDADGNPTRVGYRFDENGKKVRISRRTGKDI</sequence>
<feature type="chain" id="PRO_1000214536" description="Large ribosomal subunit protein uL24">
    <location>
        <begin position="1"/>
        <end position="104"/>
    </location>
</feature>
<gene>
    <name evidence="1" type="primary">rplX</name>
    <name type="ordered locus">ckrop_1810</name>
</gene>
<name>RL24_CORK4</name>